<evidence type="ECO:0000255" key="1">
    <source>
        <dbReference type="HAMAP-Rule" id="MF_00109"/>
    </source>
</evidence>
<accession>A7FNT6</accession>
<name>AROK_YERP3</name>
<proteinExistence type="inferred from homology"/>
<organism>
    <name type="scientific">Yersinia pseudotuberculosis serotype O:1b (strain IP 31758)</name>
    <dbReference type="NCBI Taxonomy" id="349747"/>
    <lineage>
        <taxon>Bacteria</taxon>
        <taxon>Pseudomonadati</taxon>
        <taxon>Pseudomonadota</taxon>
        <taxon>Gammaproteobacteria</taxon>
        <taxon>Enterobacterales</taxon>
        <taxon>Yersiniaceae</taxon>
        <taxon>Yersinia</taxon>
    </lineage>
</organism>
<sequence length="173" mass="19532">MAEKRNIFLVGPMGAGKSTIGRQLAQQLNMEFFDSDQEIERRTGADVGWVFDVEGEEGFRDREEKVINELTEKQGIVLATGGGSVKSRETRNRLSARGVVVYLETTIEKQLARTQRDKKRPLLQVDEPPREVLEALAKERNPLYEEIADVTIRTDDQSAKVVANQIINMLESN</sequence>
<keyword id="KW-0028">Amino-acid biosynthesis</keyword>
<keyword id="KW-0057">Aromatic amino acid biosynthesis</keyword>
<keyword id="KW-0067">ATP-binding</keyword>
<keyword id="KW-0963">Cytoplasm</keyword>
<keyword id="KW-0418">Kinase</keyword>
<keyword id="KW-0460">Magnesium</keyword>
<keyword id="KW-0479">Metal-binding</keyword>
<keyword id="KW-0547">Nucleotide-binding</keyword>
<keyword id="KW-0808">Transferase</keyword>
<protein>
    <recommendedName>
        <fullName evidence="1">Shikimate kinase 1</fullName>
        <shortName evidence="1">SK 1</shortName>
        <ecNumber evidence="1">2.7.1.71</ecNumber>
    </recommendedName>
</protein>
<dbReference type="EC" id="2.7.1.71" evidence="1"/>
<dbReference type="EMBL" id="CP000720">
    <property type="protein sequence ID" value="ABS48832.1"/>
    <property type="molecule type" value="Genomic_DNA"/>
</dbReference>
<dbReference type="RefSeq" id="WP_002208899.1">
    <property type="nucleotide sequence ID" value="NC_009708.1"/>
</dbReference>
<dbReference type="SMR" id="A7FNT6"/>
<dbReference type="GeneID" id="96663260"/>
<dbReference type="KEGG" id="ypi:YpsIP31758_3966"/>
<dbReference type="HOGENOM" id="CLU_057607_2_2_6"/>
<dbReference type="UniPathway" id="UPA00053">
    <property type="reaction ID" value="UER00088"/>
</dbReference>
<dbReference type="Proteomes" id="UP000002412">
    <property type="component" value="Chromosome"/>
</dbReference>
<dbReference type="GO" id="GO:0005829">
    <property type="term" value="C:cytosol"/>
    <property type="evidence" value="ECO:0007669"/>
    <property type="project" value="TreeGrafter"/>
</dbReference>
<dbReference type="GO" id="GO:0005524">
    <property type="term" value="F:ATP binding"/>
    <property type="evidence" value="ECO:0007669"/>
    <property type="project" value="UniProtKB-UniRule"/>
</dbReference>
<dbReference type="GO" id="GO:0000287">
    <property type="term" value="F:magnesium ion binding"/>
    <property type="evidence" value="ECO:0007669"/>
    <property type="project" value="UniProtKB-UniRule"/>
</dbReference>
<dbReference type="GO" id="GO:0004765">
    <property type="term" value="F:shikimate kinase activity"/>
    <property type="evidence" value="ECO:0007669"/>
    <property type="project" value="UniProtKB-UniRule"/>
</dbReference>
<dbReference type="GO" id="GO:0008652">
    <property type="term" value="P:amino acid biosynthetic process"/>
    <property type="evidence" value="ECO:0007669"/>
    <property type="project" value="UniProtKB-KW"/>
</dbReference>
<dbReference type="GO" id="GO:0009073">
    <property type="term" value="P:aromatic amino acid family biosynthetic process"/>
    <property type="evidence" value="ECO:0007669"/>
    <property type="project" value="UniProtKB-KW"/>
</dbReference>
<dbReference type="GO" id="GO:0009423">
    <property type="term" value="P:chorismate biosynthetic process"/>
    <property type="evidence" value="ECO:0007669"/>
    <property type="project" value="UniProtKB-UniRule"/>
</dbReference>
<dbReference type="CDD" id="cd00464">
    <property type="entry name" value="SK"/>
    <property type="match status" value="1"/>
</dbReference>
<dbReference type="FunFam" id="3.40.50.300:FF:000099">
    <property type="entry name" value="Shikimate kinase 1"/>
    <property type="match status" value="1"/>
</dbReference>
<dbReference type="Gene3D" id="3.40.50.300">
    <property type="entry name" value="P-loop containing nucleotide triphosphate hydrolases"/>
    <property type="match status" value="1"/>
</dbReference>
<dbReference type="HAMAP" id="MF_00109">
    <property type="entry name" value="Shikimate_kinase"/>
    <property type="match status" value="1"/>
</dbReference>
<dbReference type="InterPro" id="IPR027417">
    <property type="entry name" value="P-loop_NTPase"/>
</dbReference>
<dbReference type="InterPro" id="IPR031322">
    <property type="entry name" value="Shikimate/glucono_kinase"/>
</dbReference>
<dbReference type="InterPro" id="IPR000623">
    <property type="entry name" value="Shikimate_kinase/TSH1"/>
</dbReference>
<dbReference type="InterPro" id="IPR023000">
    <property type="entry name" value="Shikimate_kinase_CS"/>
</dbReference>
<dbReference type="NCBIfam" id="NF003456">
    <property type="entry name" value="PRK05057.1"/>
    <property type="match status" value="1"/>
</dbReference>
<dbReference type="PANTHER" id="PTHR21087">
    <property type="entry name" value="SHIKIMATE KINASE"/>
    <property type="match status" value="1"/>
</dbReference>
<dbReference type="PANTHER" id="PTHR21087:SF16">
    <property type="entry name" value="SHIKIMATE KINASE 1, CHLOROPLASTIC"/>
    <property type="match status" value="1"/>
</dbReference>
<dbReference type="Pfam" id="PF01202">
    <property type="entry name" value="SKI"/>
    <property type="match status" value="1"/>
</dbReference>
<dbReference type="PRINTS" id="PR01100">
    <property type="entry name" value="SHIKIMTKNASE"/>
</dbReference>
<dbReference type="SUPFAM" id="SSF52540">
    <property type="entry name" value="P-loop containing nucleoside triphosphate hydrolases"/>
    <property type="match status" value="1"/>
</dbReference>
<dbReference type="PROSITE" id="PS01128">
    <property type="entry name" value="SHIKIMATE_KINASE"/>
    <property type="match status" value="1"/>
</dbReference>
<feature type="chain" id="PRO_1000057727" description="Shikimate kinase 1">
    <location>
        <begin position="1"/>
        <end position="173"/>
    </location>
</feature>
<feature type="binding site" evidence="1">
    <location>
        <begin position="14"/>
        <end position="19"/>
    </location>
    <ligand>
        <name>ATP</name>
        <dbReference type="ChEBI" id="CHEBI:30616"/>
    </ligand>
</feature>
<feature type="binding site" evidence="1">
    <location>
        <position position="18"/>
    </location>
    <ligand>
        <name>Mg(2+)</name>
        <dbReference type="ChEBI" id="CHEBI:18420"/>
    </ligand>
</feature>
<feature type="binding site" evidence="1">
    <location>
        <position position="36"/>
    </location>
    <ligand>
        <name>substrate</name>
    </ligand>
</feature>
<feature type="binding site" evidence="1">
    <location>
        <position position="60"/>
    </location>
    <ligand>
        <name>substrate</name>
    </ligand>
</feature>
<feature type="binding site" evidence="1">
    <location>
        <position position="82"/>
    </location>
    <ligand>
        <name>substrate</name>
    </ligand>
</feature>
<feature type="binding site" evidence="1">
    <location>
        <position position="120"/>
    </location>
    <ligand>
        <name>ATP</name>
        <dbReference type="ChEBI" id="CHEBI:30616"/>
    </ligand>
</feature>
<feature type="binding site" evidence="1">
    <location>
        <position position="140"/>
    </location>
    <ligand>
        <name>substrate</name>
    </ligand>
</feature>
<feature type="binding site" evidence="1">
    <location>
        <position position="157"/>
    </location>
    <ligand>
        <name>ATP</name>
        <dbReference type="ChEBI" id="CHEBI:30616"/>
    </ligand>
</feature>
<gene>
    <name evidence="1" type="primary">aroK</name>
    <name type="ordered locus">YpsIP31758_3966</name>
</gene>
<reference key="1">
    <citation type="journal article" date="2007" name="PLoS Genet.">
        <title>The complete genome sequence of Yersinia pseudotuberculosis IP31758, the causative agent of Far East scarlet-like fever.</title>
        <authorList>
            <person name="Eppinger M."/>
            <person name="Rosovitz M.J."/>
            <person name="Fricke W.F."/>
            <person name="Rasko D.A."/>
            <person name="Kokorina G."/>
            <person name="Fayolle C."/>
            <person name="Lindler L.E."/>
            <person name="Carniel E."/>
            <person name="Ravel J."/>
        </authorList>
    </citation>
    <scope>NUCLEOTIDE SEQUENCE [LARGE SCALE GENOMIC DNA]</scope>
    <source>
        <strain>IP 31758</strain>
    </source>
</reference>
<comment type="function">
    <text evidence="1">Catalyzes the specific phosphorylation of the 3-hydroxyl group of shikimic acid using ATP as a cosubstrate.</text>
</comment>
<comment type="catalytic activity">
    <reaction evidence="1">
        <text>shikimate + ATP = 3-phosphoshikimate + ADP + H(+)</text>
        <dbReference type="Rhea" id="RHEA:13121"/>
        <dbReference type="ChEBI" id="CHEBI:15378"/>
        <dbReference type="ChEBI" id="CHEBI:30616"/>
        <dbReference type="ChEBI" id="CHEBI:36208"/>
        <dbReference type="ChEBI" id="CHEBI:145989"/>
        <dbReference type="ChEBI" id="CHEBI:456216"/>
        <dbReference type="EC" id="2.7.1.71"/>
    </reaction>
</comment>
<comment type="cofactor">
    <cofactor evidence="1">
        <name>Mg(2+)</name>
        <dbReference type="ChEBI" id="CHEBI:18420"/>
    </cofactor>
    <text evidence="1">Binds 1 Mg(2+) ion per subunit.</text>
</comment>
<comment type="pathway">
    <text evidence="1">Metabolic intermediate biosynthesis; chorismate biosynthesis; chorismate from D-erythrose 4-phosphate and phosphoenolpyruvate: step 5/7.</text>
</comment>
<comment type="subunit">
    <text evidence="1">Monomer.</text>
</comment>
<comment type="subcellular location">
    <subcellularLocation>
        <location evidence="1">Cytoplasm</location>
    </subcellularLocation>
</comment>
<comment type="similarity">
    <text evidence="1">Belongs to the shikimate kinase family.</text>
</comment>